<keyword id="KW-0067">ATP-binding</keyword>
<keyword id="KW-0119">Carbohydrate metabolism</keyword>
<keyword id="KW-0418">Kinase</keyword>
<keyword id="KW-0479">Metal-binding</keyword>
<keyword id="KW-0547">Nucleotide-binding</keyword>
<keyword id="KW-1185">Reference proteome</keyword>
<keyword id="KW-0808">Transferase</keyword>
<keyword id="KW-0862">Zinc</keyword>
<accession>Q32EX9</accession>
<sequence length="303" mass="33043">MYYGFDIGGTKIALGVFDSGRQLQWEKRVPTPRDSYDAFLDAVCELVAEADQRFGCKGSVGIGIPGMPETEDGTLYAANVPAASGKPLRADLSARLDRDVRLDNDANCFALSEAWDDEFTQYPLVMGLILGTGVGGGLIFNGKPITGKSYITGEFGHMRLPVDALTMMGLDFPLRRCGCGQHGCIENYLSGRGFAWLYQHYYHQPLQAPEIIALYDQGDEQARAHVERYLDLLAVCLGNILTIVDPDLVVIGGGLSNFPAITTQLADRLPRHLLPVARVPRIERARHGDAGGMRGAAFLHLTD</sequence>
<reference key="1">
    <citation type="journal article" date="2005" name="Nucleic Acids Res.">
        <title>Genome dynamics and diversity of Shigella species, the etiologic agents of bacillary dysentery.</title>
        <authorList>
            <person name="Yang F."/>
            <person name="Yang J."/>
            <person name="Zhang X."/>
            <person name="Chen L."/>
            <person name="Jiang Y."/>
            <person name="Yan Y."/>
            <person name="Tang X."/>
            <person name="Wang J."/>
            <person name="Xiong Z."/>
            <person name="Dong J."/>
            <person name="Xue Y."/>
            <person name="Zhu Y."/>
            <person name="Xu X."/>
            <person name="Sun L."/>
            <person name="Chen S."/>
            <person name="Nie H."/>
            <person name="Peng J."/>
            <person name="Xu J."/>
            <person name="Wang Y."/>
            <person name="Yuan Z."/>
            <person name="Wen Y."/>
            <person name="Yao Z."/>
            <person name="Shen Y."/>
            <person name="Qiang B."/>
            <person name="Hou Y."/>
            <person name="Yu J."/>
            <person name="Jin Q."/>
        </authorList>
    </citation>
    <scope>NUCLEOTIDE SEQUENCE [LARGE SCALE GENOMIC DNA]</scope>
    <source>
        <strain>Sd197</strain>
    </source>
</reference>
<feature type="chain" id="PRO_0000270116" description="N-acetyl-D-glucosamine kinase">
    <location>
        <begin position="1"/>
        <end position="303"/>
    </location>
</feature>
<feature type="binding site" evidence="1">
    <location>
        <begin position="4"/>
        <end position="11"/>
    </location>
    <ligand>
        <name>ATP</name>
        <dbReference type="ChEBI" id="CHEBI:30616"/>
    </ligand>
</feature>
<feature type="binding site" evidence="1">
    <location>
        <begin position="133"/>
        <end position="140"/>
    </location>
    <ligand>
        <name>ATP</name>
        <dbReference type="ChEBI" id="CHEBI:30616"/>
    </ligand>
</feature>
<feature type="binding site" evidence="1">
    <location>
        <position position="157"/>
    </location>
    <ligand>
        <name>Zn(2+)</name>
        <dbReference type="ChEBI" id="CHEBI:29105"/>
    </ligand>
</feature>
<feature type="binding site" evidence="1">
    <location>
        <position position="177"/>
    </location>
    <ligand>
        <name>Zn(2+)</name>
        <dbReference type="ChEBI" id="CHEBI:29105"/>
    </ligand>
</feature>
<feature type="binding site" evidence="1">
    <location>
        <position position="179"/>
    </location>
    <ligand>
        <name>Zn(2+)</name>
        <dbReference type="ChEBI" id="CHEBI:29105"/>
    </ligand>
</feature>
<feature type="binding site" evidence="1">
    <location>
        <position position="184"/>
    </location>
    <ligand>
        <name>Zn(2+)</name>
        <dbReference type="ChEBI" id="CHEBI:29105"/>
    </ligand>
</feature>
<name>NAGK_SHIDS</name>
<comment type="function">
    <text evidence="1">Catalyzes the phosphorylation of N-acetyl-D-glucosamine (GlcNAc) derived from cell-wall degradation, yielding GlcNAc-6-P.</text>
</comment>
<comment type="catalytic activity">
    <reaction evidence="1">
        <text>N-acetyl-D-glucosamine + ATP = N-acetyl-D-glucosamine 6-phosphate + ADP + H(+)</text>
        <dbReference type="Rhea" id="RHEA:17417"/>
        <dbReference type="ChEBI" id="CHEBI:15378"/>
        <dbReference type="ChEBI" id="CHEBI:30616"/>
        <dbReference type="ChEBI" id="CHEBI:57513"/>
        <dbReference type="ChEBI" id="CHEBI:456216"/>
        <dbReference type="ChEBI" id="CHEBI:506227"/>
        <dbReference type="EC" id="2.7.1.59"/>
    </reaction>
</comment>
<comment type="pathway">
    <text evidence="1">Cell wall biogenesis; peptidoglycan recycling.</text>
</comment>
<comment type="similarity">
    <text evidence="1">Belongs to the ROK (NagC/XylR) family. NagK subfamily.</text>
</comment>
<gene>
    <name evidence="1" type="primary">nagK</name>
    <name type="ordered locus">SDY_2031</name>
</gene>
<proteinExistence type="inferred from homology"/>
<organism>
    <name type="scientific">Shigella dysenteriae serotype 1 (strain Sd197)</name>
    <dbReference type="NCBI Taxonomy" id="300267"/>
    <lineage>
        <taxon>Bacteria</taxon>
        <taxon>Pseudomonadati</taxon>
        <taxon>Pseudomonadota</taxon>
        <taxon>Gammaproteobacteria</taxon>
        <taxon>Enterobacterales</taxon>
        <taxon>Enterobacteriaceae</taxon>
        <taxon>Shigella</taxon>
    </lineage>
</organism>
<evidence type="ECO:0000255" key="1">
    <source>
        <dbReference type="HAMAP-Rule" id="MF_01271"/>
    </source>
</evidence>
<protein>
    <recommendedName>
        <fullName evidence="1">N-acetyl-D-glucosamine kinase</fullName>
        <ecNumber evidence="1">2.7.1.59</ecNumber>
    </recommendedName>
    <alternativeName>
        <fullName evidence="1">GlcNAc kinase</fullName>
    </alternativeName>
</protein>
<dbReference type="EC" id="2.7.1.59" evidence="1"/>
<dbReference type="EMBL" id="CP000034">
    <property type="protein sequence ID" value="ABB62126.1"/>
    <property type="molecule type" value="Genomic_DNA"/>
</dbReference>
<dbReference type="RefSeq" id="WP_000291270.1">
    <property type="nucleotide sequence ID" value="NC_007606.1"/>
</dbReference>
<dbReference type="RefSeq" id="YP_403617.1">
    <property type="nucleotide sequence ID" value="NC_007606.1"/>
</dbReference>
<dbReference type="SMR" id="Q32EX9"/>
<dbReference type="STRING" id="300267.SDY_2031"/>
<dbReference type="EnsemblBacteria" id="ABB62126">
    <property type="protein sequence ID" value="ABB62126"/>
    <property type="gene ID" value="SDY_2031"/>
</dbReference>
<dbReference type="GeneID" id="75171243"/>
<dbReference type="KEGG" id="sdy:SDY_2031"/>
<dbReference type="PATRIC" id="fig|300267.13.peg.2444"/>
<dbReference type="HOGENOM" id="CLU_036604_0_3_6"/>
<dbReference type="UniPathway" id="UPA00544"/>
<dbReference type="Proteomes" id="UP000002716">
    <property type="component" value="Chromosome"/>
</dbReference>
<dbReference type="GO" id="GO:0005524">
    <property type="term" value="F:ATP binding"/>
    <property type="evidence" value="ECO:0007669"/>
    <property type="project" value="UniProtKB-UniRule"/>
</dbReference>
<dbReference type="GO" id="GO:0045127">
    <property type="term" value="F:N-acetylglucosamine kinase activity"/>
    <property type="evidence" value="ECO:0007669"/>
    <property type="project" value="UniProtKB-UniRule"/>
</dbReference>
<dbReference type="GO" id="GO:0008270">
    <property type="term" value="F:zinc ion binding"/>
    <property type="evidence" value="ECO:0007669"/>
    <property type="project" value="UniProtKB-UniRule"/>
</dbReference>
<dbReference type="GO" id="GO:0006044">
    <property type="term" value="P:N-acetylglucosamine metabolic process"/>
    <property type="evidence" value="ECO:0007669"/>
    <property type="project" value="UniProtKB-UniRule"/>
</dbReference>
<dbReference type="GO" id="GO:0009254">
    <property type="term" value="P:peptidoglycan turnover"/>
    <property type="evidence" value="ECO:0007669"/>
    <property type="project" value="UniProtKB-UniRule"/>
</dbReference>
<dbReference type="CDD" id="cd24057">
    <property type="entry name" value="ASKHA_NBD_ROK_NAGK"/>
    <property type="match status" value="1"/>
</dbReference>
<dbReference type="FunFam" id="3.30.420.40:FF:000049">
    <property type="entry name" value="N-acetyl-D-glucosamine kinase"/>
    <property type="match status" value="1"/>
</dbReference>
<dbReference type="FunFam" id="3.30.420.40:FF:000051">
    <property type="entry name" value="N-acetyl-D-glucosamine kinase"/>
    <property type="match status" value="1"/>
</dbReference>
<dbReference type="Gene3D" id="3.30.420.40">
    <property type="match status" value="2"/>
</dbReference>
<dbReference type="HAMAP" id="MF_01271">
    <property type="entry name" value="GlcNAc_kinase"/>
    <property type="match status" value="1"/>
</dbReference>
<dbReference type="InterPro" id="IPR043129">
    <property type="entry name" value="ATPase_NBD"/>
</dbReference>
<dbReference type="InterPro" id="IPR023505">
    <property type="entry name" value="N-acetyl-D-glucosamine_kinase"/>
</dbReference>
<dbReference type="InterPro" id="IPR000600">
    <property type="entry name" value="ROK"/>
</dbReference>
<dbReference type="InterPro" id="IPR049874">
    <property type="entry name" value="ROK_cs"/>
</dbReference>
<dbReference type="NCBIfam" id="NF009835">
    <property type="entry name" value="PRK13310.1"/>
    <property type="match status" value="1"/>
</dbReference>
<dbReference type="PANTHER" id="PTHR18964:SF162">
    <property type="entry name" value="N-ACETYL-D-GLUCOSAMINE KINASE"/>
    <property type="match status" value="1"/>
</dbReference>
<dbReference type="PANTHER" id="PTHR18964">
    <property type="entry name" value="ROK (REPRESSOR, ORF, KINASE) FAMILY"/>
    <property type="match status" value="1"/>
</dbReference>
<dbReference type="Pfam" id="PF00480">
    <property type="entry name" value="ROK"/>
    <property type="match status" value="1"/>
</dbReference>
<dbReference type="SUPFAM" id="SSF53067">
    <property type="entry name" value="Actin-like ATPase domain"/>
    <property type="match status" value="1"/>
</dbReference>
<dbReference type="PROSITE" id="PS01125">
    <property type="entry name" value="ROK"/>
    <property type="match status" value="1"/>
</dbReference>